<sequence length="525" mass="58144">MALDIHAHRILILDFGSQYTQLIARRVREIGVYCELHPFDMDDEAIREFAPKGVILAGGPESVHEANSPRCPQAVFDLGVPVFGICYGMQTMAEQLGGKVAGSELREFGYARVDVVGKSRLLDGIEDHIDADGLFGLDVWMSHGDKVTKLPEDFHILASTPSCPIAGMADDARGYYGVQFHPEVTHTKQGGRILSRFILDICGCEALWTPSKIAEDAIAQVRAQVGTDNVLLGLSGGVDSSVVAALLHKAIGDQLTCVFVDNGLLRLHEGEQVMAMFAENMGVKVIRANAEEQFLNNLEGESDPEKKRKIIGRTFIDVFDAESCKLDNIKYLAQGTIYPDVIESAGAKSGKAHVIKSHHNVGGLPEEMNLKLVEPLRELFKDEVRRLGLELGLPYDMVYRHPFPGPGLGVRILGEVKKEYADLLRRADHIFIEELRKADWYHKVSQAFVVFQPVKSVGVVGDGRRYAWVVALRAVETIDFMTARWAHLPYELLETVSGRIINEIEGISRVTYDVSSKPPATIEWE</sequence>
<keyword id="KW-0067">ATP-binding</keyword>
<keyword id="KW-0315">Glutamine amidotransferase</keyword>
<keyword id="KW-0332">GMP biosynthesis</keyword>
<keyword id="KW-0436">Ligase</keyword>
<keyword id="KW-0547">Nucleotide-binding</keyword>
<keyword id="KW-0658">Purine biosynthesis</keyword>
<name>GUAA_PSE14</name>
<gene>
    <name evidence="1" type="primary">guaA</name>
    <name type="ordered locus">PSPPH_1334</name>
</gene>
<accession>Q48LY0</accession>
<organism>
    <name type="scientific">Pseudomonas savastanoi pv. phaseolicola (strain 1448A / Race 6)</name>
    <name type="common">Pseudomonas syringae pv. phaseolicola (strain 1448A / Race 6)</name>
    <dbReference type="NCBI Taxonomy" id="264730"/>
    <lineage>
        <taxon>Bacteria</taxon>
        <taxon>Pseudomonadati</taxon>
        <taxon>Pseudomonadota</taxon>
        <taxon>Gammaproteobacteria</taxon>
        <taxon>Pseudomonadales</taxon>
        <taxon>Pseudomonadaceae</taxon>
        <taxon>Pseudomonas</taxon>
    </lineage>
</organism>
<dbReference type="EC" id="6.3.5.2" evidence="1"/>
<dbReference type="EMBL" id="CP000058">
    <property type="protein sequence ID" value="AAZ37232.1"/>
    <property type="molecule type" value="Genomic_DNA"/>
</dbReference>
<dbReference type="RefSeq" id="WP_004656303.1">
    <property type="nucleotide sequence ID" value="NC_005773.3"/>
</dbReference>
<dbReference type="SMR" id="Q48LY0"/>
<dbReference type="MEROPS" id="C26.957"/>
<dbReference type="GeneID" id="69858326"/>
<dbReference type="KEGG" id="psp:PSPPH_1334"/>
<dbReference type="eggNOG" id="COG0518">
    <property type="taxonomic scope" value="Bacteria"/>
</dbReference>
<dbReference type="eggNOG" id="COG0519">
    <property type="taxonomic scope" value="Bacteria"/>
</dbReference>
<dbReference type="HOGENOM" id="CLU_014340_0_5_6"/>
<dbReference type="UniPathway" id="UPA00189">
    <property type="reaction ID" value="UER00296"/>
</dbReference>
<dbReference type="Proteomes" id="UP000000551">
    <property type="component" value="Chromosome"/>
</dbReference>
<dbReference type="GO" id="GO:0005829">
    <property type="term" value="C:cytosol"/>
    <property type="evidence" value="ECO:0007669"/>
    <property type="project" value="TreeGrafter"/>
</dbReference>
<dbReference type="GO" id="GO:0005524">
    <property type="term" value="F:ATP binding"/>
    <property type="evidence" value="ECO:0007669"/>
    <property type="project" value="UniProtKB-UniRule"/>
</dbReference>
<dbReference type="GO" id="GO:0003921">
    <property type="term" value="F:GMP synthase activity"/>
    <property type="evidence" value="ECO:0007669"/>
    <property type="project" value="InterPro"/>
</dbReference>
<dbReference type="CDD" id="cd01742">
    <property type="entry name" value="GATase1_GMP_Synthase"/>
    <property type="match status" value="1"/>
</dbReference>
<dbReference type="CDD" id="cd01997">
    <property type="entry name" value="GMP_synthase_C"/>
    <property type="match status" value="1"/>
</dbReference>
<dbReference type="FunFam" id="3.30.300.10:FF:000002">
    <property type="entry name" value="GMP synthase [glutamine-hydrolyzing]"/>
    <property type="match status" value="1"/>
</dbReference>
<dbReference type="FunFam" id="3.40.50.620:FF:000001">
    <property type="entry name" value="GMP synthase [glutamine-hydrolyzing]"/>
    <property type="match status" value="1"/>
</dbReference>
<dbReference type="FunFam" id="3.40.50.880:FF:000001">
    <property type="entry name" value="GMP synthase [glutamine-hydrolyzing]"/>
    <property type="match status" value="1"/>
</dbReference>
<dbReference type="Gene3D" id="3.30.300.10">
    <property type="match status" value="1"/>
</dbReference>
<dbReference type="Gene3D" id="3.40.50.880">
    <property type="match status" value="1"/>
</dbReference>
<dbReference type="Gene3D" id="3.40.50.620">
    <property type="entry name" value="HUPs"/>
    <property type="match status" value="1"/>
</dbReference>
<dbReference type="HAMAP" id="MF_00344">
    <property type="entry name" value="GMP_synthase"/>
    <property type="match status" value="1"/>
</dbReference>
<dbReference type="InterPro" id="IPR029062">
    <property type="entry name" value="Class_I_gatase-like"/>
</dbReference>
<dbReference type="InterPro" id="IPR017926">
    <property type="entry name" value="GATASE"/>
</dbReference>
<dbReference type="InterPro" id="IPR001674">
    <property type="entry name" value="GMP_synth_C"/>
</dbReference>
<dbReference type="InterPro" id="IPR004739">
    <property type="entry name" value="GMP_synth_GATase"/>
</dbReference>
<dbReference type="InterPro" id="IPR022955">
    <property type="entry name" value="GMP_synthase"/>
</dbReference>
<dbReference type="InterPro" id="IPR025777">
    <property type="entry name" value="GMPS_ATP_PPase_dom"/>
</dbReference>
<dbReference type="InterPro" id="IPR022310">
    <property type="entry name" value="NAD/GMP_synthase"/>
</dbReference>
<dbReference type="InterPro" id="IPR014729">
    <property type="entry name" value="Rossmann-like_a/b/a_fold"/>
</dbReference>
<dbReference type="NCBIfam" id="TIGR00884">
    <property type="entry name" value="guaA_Cterm"/>
    <property type="match status" value="1"/>
</dbReference>
<dbReference type="NCBIfam" id="TIGR00888">
    <property type="entry name" value="guaA_Nterm"/>
    <property type="match status" value="1"/>
</dbReference>
<dbReference type="NCBIfam" id="NF000848">
    <property type="entry name" value="PRK00074.1"/>
    <property type="match status" value="1"/>
</dbReference>
<dbReference type="PANTHER" id="PTHR11922:SF2">
    <property type="entry name" value="GMP SYNTHASE [GLUTAMINE-HYDROLYZING]"/>
    <property type="match status" value="1"/>
</dbReference>
<dbReference type="PANTHER" id="PTHR11922">
    <property type="entry name" value="GMP SYNTHASE-RELATED"/>
    <property type="match status" value="1"/>
</dbReference>
<dbReference type="Pfam" id="PF00117">
    <property type="entry name" value="GATase"/>
    <property type="match status" value="1"/>
</dbReference>
<dbReference type="Pfam" id="PF00958">
    <property type="entry name" value="GMP_synt_C"/>
    <property type="match status" value="1"/>
</dbReference>
<dbReference type="Pfam" id="PF02540">
    <property type="entry name" value="NAD_synthase"/>
    <property type="match status" value="1"/>
</dbReference>
<dbReference type="PRINTS" id="PR00099">
    <property type="entry name" value="CPSGATASE"/>
</dbReference>
<dbReference type="PRINTS" id="PR00096">
    <property type="entry name" value="GATASE"/>
</dbReference>
<dbReference type="SUPFAM" id="SSF52402">
    <property type="entry name" value="Adenine nucleotide alpha hydrolases-like"/>
    <property type="match status" value="1"/>
</dbReference>
<dbReference type="SUPFAM" id="SSF52317">
    <property type="entry name" value="Class I glutamine amidotransferase-like"/>
    <property type="match status" value="1"/>
</dbReference>
<dbReference type="SUPFAM" id="SSF54810">
    <property type="entry name" value="GMP synthetase C-terminal dimerisation domain"/>
    <property type="match status" value="1"/>
</dbReference>
<dbReference type="PROSITE" id="PS51273">
    <property type="entry name" value="GATASE_TYPE_1"/>
    <property type="match status" value="1"/>
</dbReference>
<dbReference type="PROSITE" id="PS51553">
    <property type="entry name" value="GMPS_ATP_PPASE"/>
    <property type="match status" value="1"/>
</dbReference>
<reference key="1">
    <citation type="journal article" date="2005" name="J. Bacteriol.">
        <title>Whole-genome sequence analysis of Pseudomonas syringae pv. phaseolicola 1448A reveals divergence among pathovars in genes involved in virulence and transposition.</title>
        <authorList>
            <person name="Joardar V."/>
            <person name="Lindeberg M."/>
            <person name="Jackson R.W."/>
            <person name="Selengut J."/>
            <person name="Dodson R."/>
            <person name="Brinkac L.M."/>
            <person name="Daugherty S.C."/>
            <person name="DeBoy R.T."/>
            <person name="Durkin A.S."/>
            <person name="Gwinn Giglio M."/>
            <person name="Madupu R."/>
            <person name="Nelson W.C."/>
            <person name="Rosovitz M.J."/>
            <person name="Sullivan S.A."/>
            <person name="Crabtree J."/>
            <person name="Creasy T."/>
            <person name="Davidsen T.M."/>
            <person name="Haft D.H."/>
            <person name="Zafar N."/>
            <person name="Zhou L."/>
            <person name="Halpin R."/>
            <person name="Holley T."/>
            <person name="Khouri H.M."/>
            <person name="Feldblyum T.V."/>
            <person name="White O."/>
            <person name="Fraser C.M."/>
            <person name="Chatterjee A.K."/>
            <person name="Cartinhour S."/>
            <person name="Schneider D."/>
            <person name="Mansfield J.W."/>
            <person name="Collmer A."/>
            <person name="Buell R."/>
        </authorList>
    </citation>
    <scope>NUCLEOTIDE SEQUENCE [LARGE SCALE GENOMIC DNA]</scope>
    <source>
        <strain>1448A / Race 6</strain>
    </source>
</reference>
<proteinExistence type="inferred from homology"/>
<evidence type="ECO:0000255" key="1">
    <source>
        <dbReference type="HAMAP-Rule" id="MF_00344"/>
    </source>
</evidence>
<feature type="chain" id="PRO_0000229459" description="GMP synthase [glutamine-hydrolyzing]">
    <location>
        <begin position="1"/>
        <end position="525"/>
    </location>
</feature>
<feature type="domain" description="Glutamine amidotransferase type-1" evidence="1">
    <location>
        <begin position="9"/>
        <end position="207"/>
    </location>
</feature>
<feature type="domain" description="GMPS ATP-PPase" evidence="1">
    <location>
        <begin position="208"/>
        <end position="400"/>
    </location>
</feature>
<feature type="active site" description="Nucleophile" evidence="1">
    <location>
        <position position="86"/>
    </location>
</feature>
<feature type="active site" evidence="1">
    <location>
        <position position="181"/>
    </location>
</feature>
<feature type="active site" evidence="1">
    <location>
        <position position="183"/>
    </location>
</feature>
<feature type="binding site" evidence="1">
    <location>
        <begin position="235"/>
        <end position="241"/>
    </location>
    <ligand>
        <name>ATP</name>
        <dbReference type="ChEBI" id="CHEBI:30616"/>
    </ligand>
</feature>
<protein>
    <recommendedName>
        <fullName evidence="1">GMP synthase [glutamine-hydrolyzing]</fullName>
        <ecNumber evidence="1">6.3.5.2</ecNumber>
    </recommendedName>
    <alternativeName>
        <fullName evidence="1">GMP synthetase</fullName>
    </alternativeName>
    <alternativeName>
        <fullName evidence="1">Glutamine amidotransferase</fullName>
    </alternativeName>
</protein>
<comment type="function">
    <text evidence="1">Catalyzes the synthesis of GMP from XMP.</text>
</comment>
<comment type="catalytic activity">
    <reaction evidence="1">
        <text>XMP + L-glutamine + ATP + H2O = GMP + L-glutamate + AMP + diphosphate + 2 H(+)</text>
        <dbReference type="Rhea" id="RHEA:11680"/>
        <dbReference type="ChEBI" id="CHEBI:15377"/>
        <dbReference type="ChEBI" id="CHEBI:15378"/>
        <dbReference type="ChEBI" id="CHEBI:29985"/>
        <dbReference type="ChEBI" id="CHEBI:30616"/>
        <dbReference type="ChEBI" id="CHEBI:33019"/>
        <dbReference type="ChEBI" id="CHEBI:57464"/>
        <dbReference type="ChEBI" id="CHEBI:58115"/>
        <dbReference type="ChEBI" id="CHEBI:58359"/>
        <dbReference type="ChEBI" id="CHEBI:456215"/>
        <dbReference type="EC" id="6.3.5.2"/>
    </reaction>
</comment>
<comment type="pathway">
    <text evidence="1">Purine metabolism; GMP biosynthesis; GMP from XMP (L-Gln route): step 1/1.</text>
</comment>
<comment type="subunit">
    <text evidence="1">Homodimer.</text>
</comment>